<protein>
    <recommendedName>
        <fullName evidence="1">Photosystem II reaction center protein L</fullName>
        <shortName evidence="1">PSII-L</shortName>
    </recommendedName>
</protein>
<accession>A0T0A5</accession>
<proteinExistence type="inferred from homology"/>
<gene>
    <name evidence="1" type="primary">psbL</name>
</gene>
<geneLocation type="chloroplast"/>
<organism>
    <name type="scientific">Phaeodactylum tricornutum (strain CCAP 1055/1)</name>
    <dbReference type="NCBI Taxonomy" id="556484"/>
    <lineage>
        <taxon>Eukaryota</taxon>
        <taxon>Sar</taxon>
        <taxon>Stramenopiles</taxon>
        <taxon>Ochrophyta</taxon>
        <taxon>Bacillariophyta</taxon>
        <taxon>Bacillariophyceae</taxon>
        <taxon>Bacillariophycidae</taxon>
        <taxon>Naviculales</taxon>
        <taxon>Phaeodactylaceae</taxon>
        <taxon>Phaeodactylum</taxon>
    </lineage>
</organism>
<keyword id="KW-0150">Chloroplast</keyword>
<keyword id="KW-0472">Membrane</keyword>
<keyword id="KW-0602">Photosynthesis</keyword>
<keyword id="KW-0604">Photosystem II</keyword>
<keyword id="KW-0934">Plastid</keyword>
<keyword id="KW-0674">Reaction center</keyword>
<keyword id="KW-1185">Reference proteome</keyword>
<keyword id="KW-0793">Thylakoid</keyword>
<keyword id="KW-0812">Transmembrane</keyword>
<keyword id="KW-1133">Transmembrane helix</keyword>
<name>PSBL_PHATC</name>
<dbReference type="EMBL" id="EF067920">
    <property type="protein sequence ID" value="ABK20594.1"/>
    <property type="molecule type" value="Genomic_DNA"/>
</dbReference>
<dbReference type="RefSeq" id="YP_874371.1">
    <property type="nucleotide sequence ID" value="NC_008588.1"/>
</dbReference>
<dbReference type="SMR" id="A0T0A5"/>
<dbReference type="STRING" id="556484.A0T0A5"/>
<dbReference type="GeneID" id="4524574"/>
<dbReference type="InParanoid" id="A0T0A5"/>
<dbReference type="Proteomes" id="UP000000759">
    <property type="component" value="Chloroplast"/>
</dbReference>
<dbReference type="GO" id="GO:0009535">
    <property type="term" value="C:chloroplast thylakoid membrane"/>
    <property type="evidence" value="ECO:0007669"/>
    <property type="project" value="UniProtKB-SubCell"/>
</dbReference>
<dbReference type="GO" id="GO:0009539">
    <property type="term" value="C:photosystem II reaction center"/>
    <property type="evidence" value="ECO:0007669"/>
    <property type="project" value="InterPro"/>
</dbReference>
<dbReference type="GO" id="GO:0015979">
    <property type="term" value="P:photosynthesis"/>
    <property type="evidence" value="ECO:0007669"/>
    <property type="project" value="UniProtKB-UniRule"/>
</dbReference>
<dbReference type="HAMAP" id="MF_01317">
    <property type="entry name" value="PSII_PsbL"/>
    <property type="match status" value="1"/>
</dbReference>
<dbReference type="InterPro" id="IPR003372">
    <property type="entry name" value="PSII_PsbL"/>
</dbReference>
<dbReference type="InterPro" id="IPR037266">
    <property type="entry name" value="PSII_PsbL_sf"/>
</dbReference>
<dbReference type="NCBIfam" id="NF001972">
    <property type="entry name" value="PRK00753.1"/>
    <property type="match status" value="1"/>
</dbReference>
<dbReference type="Pfam" id="PF02419">
    <property type="entry name" value="PsbL"/>
    <property type="match status" value="1"/>
</dbReference>
<dbReference type="SUPFAM" id="SSF161017">
    <property type="entry name" value="Photosystem II reaction center protein L, PsbL"/>
    <property type="match status" value="1"/>
</dbReference>
<sequence>MTGPNPNKQAVELNRTSLYWGLLLIFVLAVLFSSYFFN</sequence>
<evidence type="ECO:0000255" key="1">
    <source>
        <dbReference type="HAMAP-Rule" id="MF_01317"/>
    </source>
</evidence>
<reference key="1">
    <citation type="journal article" date="2007" name="Mol. Genet. Genomics">
        <title>Chloroplast genomes of the diatoms Phaeodactylum tricornutum and Thalassiosira pseudonana: comparison with other plastid genomes of the red lineage.</title>
        <authorList>
            <person name="Oudot-Le Secq M.-P."/>
            <person name="Grimwood J."/>
            <person name="Shapiro H."/>
            <person name="Armbrust E.V."/>
            <person name="Bowler C."/>
            <person name="Green B.R."/>
        </authorList>
    </citation>
    <scope>NUCLEOTIDE SEQUENCE [LARGE SCALE GENOMIC DNA]</scope>
    <source>
        <strain>CCAP 1055/1</strain>
    </source>
</reference>
<feature type="chain" id="PRO_0000276229" description="Photosystem II reaction center protein L">
    <location>
        <begin position="1"/>
        <end position="38"/>
    </location>
</feature>
<feature type="transmembrane region" description="Helical" evidence="1">
    <location>
        <begin position="17"/>
        <end position="37"/>
    </location>
</feature>
<comment type="function">
    <text evidence="1">One of the components of the core complex of photosystem II (PSII). PSII is a light-driven water:plastoquinone oxidoreductase that uses light energy to abstract electrons from H(2)O, generating O(2) and a proton gradient subsequently used for ATP formation. It consists of a core antenna complex that captures photons, and an electron transfer chain that converts photonic excitation into a charge separation. This subunit is found at the monomer-monomer interface and is required for correct PSII assembly and/or dimerization.</text>
</comment>
<comment type="subunit">
    <text evidence="1">PSII is composed of 1 copy each of membrane proteins PsbA, PsbB, PsbC, PsbD, PsbE, PsbF, PsbH, PsbI, PsbJ, PsbK, PsbL, PsbM, PsbT, PsbX, PsbY, PsbZ, Psb30/Ycf12, at least 3 peripheral proteins of the oxygen-evolving complex and a large number of cofactors. It forms dimeric complexes.</text>
</comment>
<comment type="subcellular location">
    <subcellularLocation>
        <location evidence="1">Plastid</location>
        <location evidence="1">Chloroplast thylakoid membrane</location>
        <topology evidence="1">Single-pass membrane protein</topology>
    </subcellularLocation>
</comment>
<comment type="similarity">
    <text evidence="1">Belongs to the PsbL family.</text>
</comment>